<keyword id="KW-0067">ATP-binding</keyword>
<keyword id="KW-0436">Ligase</keyword>
<keyword id="KW-0547">Nucleotide-binding</keyword>
<keyword id="KW-0648">Protein biosynthesis</keyword>
<keyword id="KW-1185">Reference proteome</keyword>
<name>GATC_GLUDA</name>
<protein>
    <recommendedName>
        <fullName evidence="1">Aspartyl/glutamyl-tRNA(Asn/Gln) amidotransferase subunit C</fullName>
        <shortName evidence="1">Asp/Glu-ADT subunit C</shortName>
        <ecNumber evidence="1">6.3.5.-</ecNumber>
    </recommendedName>
</protein>
<comment type="function">
    <text evidence="1">Allows the formation of correctly charged Asn-tRNA(Asn) or Gln-tRNA(Gln) through the transamidation of misacylated Asp-tRNA(Asn) or Glu-tRNA(Gln) in organisms which lack either or both of asparaginyl-tRNA or glutaminyl-tRNA synthetases. The reaction takes place in the presence of glutamine and ATP through an activated phospho-Asp-tRNA(Asn) or phospho-Glu-tRNA(Gln).</text>
</comment>
<comment type="catalytic activity">
    <reaction evidence="1">
        <text>L-glutamyl-tRNA(Gln) + L-glutamine + ATP + H2O = L-glutaminyl-tRNA(Gln) + L-glutamate + ADP + phosphate + H(+)</text>
        <dbReference type="Rhea" id="RHEA:17521"/>
        <dbReference type="Rhea" id="RHEA-COMP:9681"/>
        <dbReference type="Rhea" id="RHEA-COMP:9684"/>
        <dbReference type="ChEBI" id="CHEBI:15377"/>
        <dbReference type="ChEBI" id="CHEBI:15378"/>
        <dbReference type="ChEBI" id="CHEBI:29985"/>
        <dbReference type="ChEBI" id="CHEBI:30616"/>
        <dbReference type="ChEBI" id="CHEBI:43474"/>
        <dbReference type="ChEBI" id="CHEBI:58359"/>
        <dbReference type="ChEBI" id="CHEBI:78520"/>
        <dbReference type="ChEBI" id="CHEBI:78521"/>
        <dbReference type="ChEBI" id="CHEBI:456216"/>
    </reaction>
</comment>
<comment type="catalytic activity">
    <reaction evidence="1">
        <text>L-aspartyl-tRNA(Asn) + L-glutamine + ATP + H2O = L-asparaginyl-tRNA(Asn) + L-glutamate + ADP + phosphate + 2 H(+)</text>
        <dbReference type="Rhea" id="RHEA:14513"/>
        <dbReference type="Rhea" id="RHEA-COMP:9674"/>
        <dbReference type="Rhea" id="RHEA-COMP:9677"/>
        <dbReference type="ChEBI" id="CHEBI:15377"/>
        <dbReference type="ChEBI" id="CHEBI:15378"/>
        <dbReference type="ChEBI" id="CHEBI:29985"/>
        <dbReference type="ChEBI" id="CHEBI:30616"/>
        <dbReference type="ChEBI" id="CHEBI:43474"/>
        <dbReference type="ChEBI" id="CHEBI:58359"/>
        <dbReference type="ChEBI" id="CHEBI:78515"/>
        <dbReference type="ChEBI" id="CHEBI:78516"/>
        <dbReference type="ChEBI" id="CHEBI:456216"/>
    </reaction>
</comment>
<comment type="subunit">
    <text evidence="1">Heterotrimer of A, B and C subunits.</text>
</comment>
<comment type="similarity">
    <text evidence="1">Belongs to the GatC family.</text>
</comment>
<sequence length="95" mass="10148">MSLDPATVRRIARLARIGIDESDLHALQGELNGILGWIEQLNEVDIDGVEPMVGTGHAALRMREDVVTDGAARDAVLSNAPDAAGPFYTVPKVVE</sequence>
<proteinExistence type="inferred from homology"/>
<gene>
    <name evidence="1" type="primary">gatC</name>
    <name type="ordered locus">GDI2979</name>
    <name type="ordered locus">Gdia_3371</name>
</gene>
<accession>A9HRJ1</accession>
<accession>B5ZLF5</accession>
<evidence type="ECO:0000255" key="1">
    <source>
        <dbReference type="HAMAP-Rule" id="MF_00122"/>
    </source>
</evidence>
<evidence type="ECO:0000305" key="2"/>
<dbReference type="EC" id="6.3.5.-" evidence="1"/>
<dbReference type="EMBL" id="AM889285">
    <property type="protein sequence ID" value="CAP56922.1"/>
    <property type="molecule type" value="Genomic_DNA"/>
</dbReference>
<dbReference type="EMBL" id="CP001189">
    <property type="protein sequence ID" value="ACI53097.1"/>
    <property type="molecule type" value="Genomic_DNA"/>
</dbReference>
<dbReference type="RefSeq" id="WP_012227230.1">
    <property type="nucleotide sequence ID" value="NC_010125.1"/>
</dbReference>
<dbReference type="RefSeq" id="WP_012554912.1">
    <property type="nucleotide sequence ID" value="NC_011365.1"/>
</dbReference>
<dbReference type="SMR" id="A9HRJ1"/>
<dbReference type="STRING" id="272568.GDI2979"/>
<dbReference type="KEGG" id="gdi:GDI2979"/>
<dbReference type="KEGG" id="gdj:Gdia_3371"/>
<dbReference type="eggNOG" id="COG0721">
    <property type="taxonomic scope" value="Bacteria"/>
</dbReference>
<dbReference type="HOGENOM" id="CLU_105899_2_0_5"/>
<dbReference type="OrthoDB" id="9794326at2"/>
<dbReference type="Proteomes" id="UP000001176">
    <property type="component" value="Chromosome"/>
</dbReference>
<dbReference type="GO" id="GO:0050566">
    <property type="term" value="F:asparaginyl-tRNA synthase (glutamine-hydrolyzing) activity"/>
    <property type="evidence" value="ECO:0007669"/>
    <property type="project" value="RHEA"/>
</dbReference>
<dbReference type="GO" id="GO:0005524">
    <property type="term" value="F:ATP binding"/>
    <property type="evidence" value="ECO:0007669"/>
    <property type="project" value="UniProtKB-KW"/>
</dbReference>
<dbReference type="GO" id="GO:0050567">
    <property type="term" value="F:glutaminyl-tRNA synthase (glutamine-hydrolyzing) activity"/>
    <property type="evidence" value="ECO:0007669"/>
    <property type="project" value="UniProtKB-UniRule"/>
</dbReference>
<dbReference type="GO" id="GO:0070681">
    <property type="term" value="P:glutaminyl-tRNAGln biosynthesis via transamidation"/>
    <property type="evidence" value="ECO:0007669"/>
    <property type="project" value="TreeGrafter"/>
</dbReference>
<dbReference type="GO" id="GO:0006450">
    <property type="term" value="P:regulation of translational fidelity"/>
    <property type="evidence" value="ECO:0007669"/>
    <property type="project" value="InterPro"/>
</dbReference>
<dbReference type="GO" id="GO:0006412">
    <property type="term" value="P:translation"/>
    <property type="evidence" value="ECO:0007669"/>
    <property type="project" value="UniProtKB-UniRule"/>
</dbReference>
<dbReference type="Gene3D" id="1.10.20.60">
    <property type="entry name" value="Glu-tRNAGln amidotransferase C subunit, N-terminal domain"/>
    <property type="match status" value="1"/>
</dbReference>
<dbReference type="HAMAP" id="MF_00122">
    <property type="entry name" value="GatC"/>
    <property type="match status" value="1"/>
</dbReference>
<dbReference type="InterPro" id="IPR036113">
    <property type="entry name" value="Asp/Glu-ADT_sf_sub_c"/>
</dbReference>
<dbReference type="InterPro" id="IPR003837">
    <property type="entry name" value="GatC"/>
</dbReference>
<dbReference type="NCBIfam" id="TIGR00135">
    <property type="entry name" value="gatC"/>
    <property type="match status" value="1"/>
</dbReference>
<dbReference type="PANTHER" id="PTHR15004">
    <property type="entry name" value="GLUTAMYL-TRNA(GLN) AMIDOTRANSFERASE SUBUNIT C, MITOCHONDRIAL"/>
    <property type="match status" value="1"/>
</dbReference>
<dbReference type="PANTHER" id="PTHR15004:SF0">
    <property type="entry name" value="GLUTAMYL-TRNA(GLN) AMIDOTRANSFERASE SUBUNIT C, MITOCHONDRIAL"/>
    <property type="match status" value="1"/>
</dbReference>
<dbReference type="Pfam" id="PF02686">
    <property type="entry name" value="GatC"/>
    <property type="match status" value="1"/>
</dbReference>
<dbReference type="SUPFAM" id="SSF141000">
    <property type="entry name" value="Glu-tRNAGln amidotransferase C subunit"/>
    <property type="match status" value="1"/>
</dbReference>
<reference key="1">
    <citation type="journal article" date="2009" name="BMC Genomics">
        <title>Complete genome sequence of the sugarcane nitrogen-fixing endophyte Gluconacetobacter diazotrophicus Pal5.</title>
        <authorList>
            <person name="Bertalan M."/>
            <person name="Albano R."/>
            <person name="de Padua V."/>
            <person name="Rouws L."/>
            <person name="Rojas C."/>
            <person name="Hemerly A."/>
            <person name="Teixeira K."/>
            <person name="Schwab S."/>
            <person name="Araujo J."/>
            <person name="Oliveira A."/>
            <person name="Franca L."/>
            <person name="Magalhaes V."/>
            <person name="Alqueres S."/>
            <person name="Cardoso A."/>
            <person name="Almeida W."/>
            <person name="Loureiro M.M."/>
            <person name="Nogueira E."/>
            <person name="Cidade D."/>
            <person name="Oliveira D."/>
            <person name="Simao T."/>
            <person name="Macedo J."/>
            <person name="Valadao A."/>
            <person name="Dreschsel M."/>
            <person name="Freitas F."/>
            <person name="Vidal M."/>
            <person name="Guedes H."/>
            <person name="Rodrigues E."/>
            <person name="Meneses C."/>
            <person name="Brioso P."/>
            <person name="Pozzer L."/>
            <person name="Figueiredo D."/>
            <person name="Montano H."/>
            <person name="Junior J."/>
            <person name="de Souza Filho G."/>
            <person name="Martin Quintana Flores V."/>
            <person name="Ferreira B."/>
            <person name="Branco A."/>
            <person name="Gonzalez P."/>
            <person name="Guillobel H."/>
            <person name="Lemos M."/>
            <person name="Seibel L."/>
            <person name="Macedo J."/>
            <person name="Alves-Ferreira M."/>
            <person name="Sachetto-Martins G."/>
            <person name="Coelho A."/>
            <person name="Santos E."/>
            <person name="Amaral G."/>
            <person name="Neves A."/>
            <person name="Pacheco A.B."/>
            <person name="Carvalho D."/>
            <person name="Lery L."/>
            <person name="Bisch P."/>
            <person name="Rossle S.C."/>
            <person name="Urmenyi T."/>
            <person name="Rael Pereira A."/>
            <person name="Silva R."/>
            <person name="Rondinelli E."/>
            <person name="von Kruger W."/>
            <person name="Martins O."/>
            <person name="Baldani J.I."/>
            <person name="Ferreira P.C."/>
        </authorList>
    </citation>
    <scope>NUCLEOTIDE SEQUENCE [LARGE SCALE GENOMIC DNA]</scope>
    <source>
        <strain>ATCC 49037 / DSM 5601 / CCUG 37298 / CIP 103539 / LMG 7603 / PAl5</strain>
    </source>
</reference>
<reference key="2">
    <citation type="journal article" date="2010" name="Stand. Genomic Sci.">
        <title>Two genome sequences of the same bacterial strain, Gluconacetobacter diazotrophicus PAl 5, suggest a new standard in genome sequence submission.</title>
        <authorList>
            <person name="Giongo A."/>
            <person name="Tyler H.L."/>
            <person name="Zipperer U.N."/>
            <person name="Triplett E.W."/>
        </authorList>
    </citation>
    <scope>NUCLEOTIDE SEQUENCE [LARGE SCALE GENOMIC DNA]</scope>
    <source>
        <strain>ATCC 49037 / DSM 5601 / CCUG 37298 / CIP 103539 / LMG 7603 / PAl5</strain>
    </source>
</reference>
<organism>
    <name type="scientific">Gluconacetobacter diazotrophicus (strain ATCC 49037 / DSM 5601 / CCUG 37298 / CIP 103539 / LMG 7603 / PAl5)</name>
    <dbReference type="NCBI Taxonomy" id="272568"/>
    <lineage>
        <taxon>Bacteria</taxon>
        <taxon>Pseudomonadati</taxon>
        <taxon>Pseudomonadota</taxon>
        <taxon>Alphaproteobacteria</taxon>
        <taxon>Acetobacterales</taxon>
        <taxon>Acetobacteraceae</taxon>
        <taxon>Gluconacetobacter</taxon>
    </lineage>
</organism>
<feature type="chain" id="PRO_1000076184" description="Aspartyl/glutamyl-tRNA(Asn/Gln) amidotransferase subunit C">
    <location>
        <begin position="1"/>
        <end position="95"/>
    </location>
</feature>
<feature type="sequence conflict" description="In Ref. 2; ACI53097." evidence="2" ref="2">
    <original>D</original>
    <variation>N</variation>
    <location>
        <position position="20"/>
    </location>
</feature>